<comment type="function">
    <text evidence="3 6">Inhibits the enzymatic activity of phospholipase A2 (PA2) (PubMed:10924158). Binds to the major PLA2 toxin of D.russelli siamensis (Daboiatoxin, AC Q7T2R1, and AC Q7T3T5) at 1-2-fold molar excess of inhibitor to toxin (PubMed:10924158). It exhibits broad spectra in neutralizing the toxicity of various snake venoms and toxins and inhibits the formation of edema in mice (PubMed:10924158). May bind to PLA2 through its proline-rich hydrophobic core region (Probable).</text>
</comment>
<comment type="subunit">
    <text evidence="3">Homohexamer.</text>
</comment>
<comment type="subcellular location">
    <subcellularLocation>
        <location evidence="3">Secreted</location>
    </subcellularLocation>
    <text evidence="3">Secreted in blood plasma.</text>
</comment>
<comment type="tissue specificity">
    <text evidence="6">Expressed by the liver.</text>
</comment>
<comment type="PTM">
    <text evidence="3">Glycosylated.</text>
</comment>
<comment type="mass spectrometry"/>
<comment type="similarity">
    <text evidence="5">Belongs to the CNF-like-inhibitor family.</text>
</comment>
<name>PLIG_MALRE</name>
<feature type="signal peptide" evidence="3">
    <location>
        <begin position="1"/>
        <end position="19"/>
    </location>
</feature>
<feature type="chain" id="PRO_5004327205" description="Phospholipase A2 inhibitor PIP" evidence="6">
    <location>
        <begin position="20"/>
        <end position="201"/>
    </location>
</feature>
<feature type="glycosylation site" description="N-linked (GlcNAc...) asparagine" evidence="2">
    <location>
        <position position="157"/>
    </location>
</feature>
<feature type="disulfide bond" evidence="1">
    <location>
        <begin position="22"/>
        <end position="46"/>
    </location>
</feature>
<feature type="disulfide bond" evidence="1">
    <location>
        <begin position="25"/>
        <end position="32"/>
    </location>
</feature>
<feature type="disulfide bond" evidence="1">
    <location>
        <begin position="39"/>
        <end position="67"/>
    </location>
</feature>
<feature type="disulfide bond" evidence="1">
    <location>
        <begin position="73"/>
        <end position="94"/>
    </location>
</feature>
<feature type="disulfide bond" evidence="1">
    <location>
        <begin position="95"/>
        <end position="100"/>
    </location>
</feature>
<feature type="disulfide bond" evidence="1">
    <location>
        <begin position="118"/>
        <end position="143"/>
    </location>
</feature>
<feature type="disulfide bond" evidence="1">
    <location>
        <begin position="136"/>
        <end position="165"/>
    </location>
</feature>
<feature type="disulfide bond" evidence="1">
    <location>
        <begin position="169"/>
        <end position="191"/>
    </location>
</feature>
<evidence type="ECO:0000250" key="1">
    <source>
        <dbReference type="UniProtKB" id="Q7LZI1"/>
    </source>
</evidence>
<evidence type="ECO:0000255" key="2">
    <source>
        <dbReference type="PROSITE-ProRule" id="PRU00498"/>
    </source>
</evidence>
<evidence type="ECO:0000269" key="3">
    <source>
    </source>
</evidence>
<evidence type="ECO:0000303" key="4">
    <source>
    </source>
</evidence>
<evidence type="ECO:0000305" key="5"/>
<evidence type="ECO:0000305" key="6">
    <source>
    </source>
</evidence>
<dbReference type="EMBL" id="AF232771">
    <property type="protein sequence ID" value="AAF73945.1"/>
    <property type="molecule type" value="mRNA"/>
</dbReference>
<dbReference type="GO" id="GO:0005576">
    <property type="term" value="C:extracellular region"/>
    <property type="evidence" value="ECO:0007669"/>
    <property type="project" value="UniProtKB-SubCell"/>
</dbReference>
<dbReference type="GO" id="GO:0019834">
    <property type="term" value="F:phospholipase A2 inhibitor activity"/>
    <property type="evidence" value="ECO:0007669"/>
    <property type="project" value="UniProtKB-KW"/>
</dbReference>
<dbReference type="CDD" id="cd23629">
    <property type="entry name" value="TFP_LU_ECD_PLIGA"/>
    <property type="match status" value="1"/>
</dbReference>
<dbReference type="Gene3D" id="2.10.60.10">
    <property type="entry name" value="CD59"/>
    <property type="match status" value="2"/>
</dbReference>
<dbReference type="InterPro" id="IPR050918">
    <property type="entry name" value="CNF-like_PLA2_Inhibitor"/>
</dbReference>
<dbReference type="InterPro" id="IPR016054">
    <property type="entry name" value="LY6_UPA_recep-like"/>
</dbReference>
<dbReference type="InterPro" id="IPR016338">
    <property type="entry name" value="PLipase_A2-inh_b-type"/>
</dbReference>
<dbReference type="InterPro" id="IPR004126">
    <property type="entry name" value="PLipase_A2_inh_N"/>
</dbReference>
<dbReference type="InterPro" id="IPR045860">
    <property type="entry name" value="Snake_toxin-like_sf"/>
</dbReference>
<dbReference type="PANTHER" id="PTHR20914">
    <property type="entry name" value="LY6/PLAUR DOMAIN-CONTAINING PROTEIN 8"/>
    <property type="match status" value="1"/>
</dbReference>
<dbReference type="PANTHER" id="PTHR20914:SF30">
    <property type="entry name" value="LY6_PLAUR DOMAIN CONTAINING 9"/>
    <property type="match status" value="1"/>
</dbReference>
<dbReference type="Pfam" id="PF02988">
    <property type="entry name" value="PLA2_inh"/>
    <property type="match status" value="1"/>
</dbReference>
<dbReference type="Pfam" id="PF00021">
    <property type="entry name" value="UPAR_LY6"/>
    <property type="match status" value="1"/>
</dbReference>
<dbReference type="PIRSF" id="PIRSF002023">
    <property type="entry name" value="PLA2_inhib_alpha/gamma"/>
    <property type="match status" value="1"/>
</dbReference>
<dbReference type="SMART" id="SM00134">
    <property type="entry name" value="LU"/>
    <property type="match status" value="1"/>
</dbReference>
<dbReference type="SUPFAM" id="SSF57302">
    <property type="entry name" value="Snake toxin-like"/>
    <property type="match status" value="2"/>
</dbReference>
<organism>
    <name type="scientific">Malayopython reticulatus</name>
    <name type="common">Reticulate python</name>
    <name type="synonym">Python reticulatus</name>
    <dbReference type="NCBI Taxonomy" id="1496311"/>
    <lineage>
        <taxon>Eukaryota</taxon>
        <taxon>Metazoa</taxon>
        <taxon>Chordata</taxon>
        <taxon>Craniata</taxon>
        <taxon>Vertebrata</taxon>
        <taxon>Euteleostomi</taxon>
        <taxon>Lepidosauria</taxon>
        <taxon>Squamata</taxon>
        <taxon>Bifurcata</taxon>
        <taxon>Unidentata</taxon>
        <taxon>Episquamata</taxon>
        <taxon>Toxicofera</taxon>
        <taxon>Serpentes</taxon>
        <taxon>Henophidia</taxon>
        <taxon>Pythonidae</taxon>
        <taxon>Malayopython</taxon>
    </lineage>
</organism>
<proteinExistence type="evidence at protein level"/>
<sequence>MKSLQTICLLFIFIARGTSDKCEICHGFGDDCDGYQEECPSPEDRCGKILIDIALAPVSFRATHKNCFSSSICKLGRVDIHVWDGVYIRGRTNCCDNDQCEDQPLPGLPLSLQNGLYCPGAFGIFTEDSTEHEVKCRGTETMCLDLVGYRQESYAGNITYNIKGCVSSCPLVTLSERGHEGRKNDLKKVECREALKPASSD</sequence>
<keyword id="KW-0903">Direct protein sequencing</keyword>
<keyword id="KW-1015">Disulfide bond</keyword>
<keyword id="KW-0325">Glycoprotein</keyword>
<keyword id="KW-0593">Phospholipase A2 inhibitor</keyword>
<keyword id="KW-0964">Secreted</keyword>
<keyword id="KW-0732">Signal</keyword>
<protein>
    <recommendedName>
        <fullName evidence="5">Phospholipase A2 inhibitor PIP</fullName>
    </recommendedName>
    <alternativeName>
        <fullName evidence="4">Phospholipase inhibitor from python</fullName>
        <shortName evidence="4">PIP</shortName>
    </alternativeName>
    <alternativeName>
        <fullName>gamma-PLI</fullName>
    </alternativeName>
</protein>
<accession>Q9I8P7</accession>
<reference key="1">
    <citation type="journal article" date="2000" name="Biochemistry">
        <title>Recombinant antitoxic and antiinflammatory factor from the nonvenomous snake Python reticulatus: phospholipase A2 inhibition and venom neutralizing potential.</title>
        <authorList>
            <person name="Thwin M.M."/>
            <person name="Gopalakrishnakone P."/>
            <person name="Kini R.M."/>
            <person name="Armugam A."/>
            <person name="Jeyaseelan K."/>
        </authorList>
    </citation>
    <scope>NUCLEOTIDE SEQUENCE [MRNA]</scope>
    <scope>PROTEIN SEQUENCE OF 20-37</scope>
    <scope>RECOMBINANT EXPRESSION</scope>
    <scope>FUNCTION</scope>
    <scope>SUBUNIT</scope>
    <scope>SUBCELLULAR LOCATION</scope>
    <scope>MASS SPECTROMETRY</scope>
    <scope>GLYCOSYLATION</scope>
    <source>
        <tissue>Liver</tissue>
        <tissue>Serum</tissue>
    </source>
</reference>